<protein>
    <recommendedName>
        <fullName evidence="1">ATP synthase subunit beta 2</fullName>
        <ecNumber evidence="1">7.1.2.2</ecNumber>
    </recommendedName>
    <alternativeName>
        <fullName evidence="1">ATP synthase F1 sector subunit beta 2</fullName>
    </alternativeName>
    <alternativeName>
        <fullName evidence="1">F-ATPase subunit beta 2</fullName>
    </alternativeName>
</protein>
<geneLocation type="plasmid">
    <name>pRS241a</name>
</geneLocation>
<comment type="function">
    <text evidence="1">Produces ATP from ADP in the presence of a proton gradient across the membrane. The catalytic sites are hosted primarily by the beta subunits.</text>
</comment>
<comment type="catalytic activity">
    <reaction evidence="1">
        <text>ATP + H2O + 4 H(+)(in) = ADP + phosphate + 5 H(+)(out)</text>
        <dbReference type="Rhea" id="RHEA:57720"/>
        <dbReference type="ChEBI" id="CHEBI:15377"/>
        <dbReference type="ChEBI" id="CHEBI:15378"/>
        <dbReference type="ChEBI" id="CHEBI:30616"/>
        <dbReference type="ChEBI" id="CHEBI:43474"/>
        <dbReference type="ChEBI" id="CHEBI:456216"/>
        <dbReference type="EC" id="7.1.2.2"/>
    </reaction>
</comment>
<comment type="subunit">
    <text evidence="1">F-type ATPases have 2 components, CF(1) - the catalytic core - and CF(0) - the membrane proton channel. CF(1) has five subunits: alpha(3), beta(3), gamma(1), delta(1), epsilon(1). CF(0) has four main subunits: a(1), b(1), b'(1) and c(9-12).</text>
</comment>
<comment type="subcellular location">
    <subcellularLocation>
        <location evidence="1">Cell inner membrane</location>
        <topology evidence="1">Peripheral membrane protein</topology>
    </subcellularLocation>
</comment>
<comment type="similarity">
    <text evidence="1">Belongs to the ATPase alpha/beta chains family.</text>
</comment>
<accession>Q3HKH4</accession>
<keyword id="KW-0066">ATP synthesis</keyword>
<keyword id="KW-0067">ATP-binding</keyword>
<keyword id="KW-0997">Cell inner membrane</keyword>
<keyword id="KW-1003">Cell membrane</keyword>
<keyword id="KW-0139">CF(1)</keyword>
<keyword id="KW-0375">Hydrogen ion transport</keyword>
<keyword id="KW-0406">Ion transport</keyword>
<keyword id="KW-0472">Membrane</keyword>
<keyword id="KW-0547">Nucleotide-binding</keyword>
<keyword id="KW-0614">Plasmid</keyword>
<keyword id="KW-1185">Reference proteome</keyword>
<keyword id="KW-1278">Translocase</keyword>
<keyword id="KW-0813">Transport</keyword>
<reference key="1">
    <citation type="submission" date="2005-10" db="EMBL/GenBank/DDBJ databases">
        <title>Finished sequence of plasmid A of Rhodobacter sphaeroides 2.4.1.</title>
        <authorList>
            <person name="Copeland A."/>
            <person name="Lucas S."/>
            <person name="Lapidus A."/>
            <person name="Barry K."/>
            <person name="Detter J.C."/>
            <person name="Glavina T."/>
            <person name="Hammon N."/>
            <person name="Israni S."/>
            <person name="Pitluck S."/>
            <person name="Richardson P."/>
            <person name="Mackenzie C."/>
            <person name="Choudhary M."/>
            <person name="Larimer F."/>
            <person name="Hauser L.J."/>
            <person name="Land M."/>
            <person name="Donohue T.J."/>
            <person name="Kaplan S."/>
        </authorList>
    </citation>
    <scope>NUCLEOTIDE SEQUENCE [LARGE SCALE GENOMIC DNA]</scope>
    <source>
        <strain>ATCC 17023 / DSM 158 / JCM 6121 / CCUG 31486 / LMG 2827 / NBRC 12203 / NCIMB 8253 / ATH 2.4.1.</strain>
    </source>
</reference>
<gene>
    <name evidence="1" type="primary">atpD2</name>
    <name type="ordered locus">RSP_3929</name>
</gene>
<organism>
    <name type="scientific">Cereibacter sphaeroides (strain ATCC 17023 / DSM 158 / JCM 6121 / CCUG 31486 / LMG 2827 / NBRC 12203 / NCIMB 8253 / ATH 2.4.1.)</name>
    <name type="common">Rhodobacter sphaeroides</name>
    <dbReference type="NCBI Taxonomy" id="272943"/>
    <lineage>
        <taxon>Bacteria</taxon>
        <taxon>Pseudomonadati</taxon>
        <taxon>Pseudomonadota</taxon>
        <taxon>Alphaproteobacteria</taxon>
        <taxon>Rhodobacterales</taxon>
        <taxon>Paracoccaceae</taxon>
        <taxon>Cereibacter</taxon>
    </lineage>
</organism>
<sequence length="464" mass="48830">MTGRVTSVRGPVLDIRVEGPLPAIGDVVEVGSLPVVAEIQAHLGAADVRAIALHSTQGIARGETVRTTGGPLRVPTGPAVLGRLLDVAGRPADLGPPIPAGAPRAPILHPAPPLAAQDARFQVFSTGIKVLDLLAPLAQGGKTAMFGGAGVGKTVLVMELIRAMVSGYDGISVFAGVGERSREGHEMLGEMKASGVLDRTVLVYGQMNEPPGARWRVPLTALTIAEGFRDGEGRNVLLLIDNVFRFVQAGAEVSGLLGRMPSRVGYQPTLETEVAALQERIASVGRASVTAIEAVYVPADDFTDPAVTAISAHVDSTVVLSRQLAAEGIYPAIDPLATTSVLLDPAVVGEEHARVAGRLKEAIEHYHELRDVIALLGIEELGREEQLMVGRARKLQRFLTQPFFVAAAYTGMEGRSVPVAETVQGCAAILGGECDDWDEGSLYMIGTLAEARAREEARRRKGAA</sequence>
<dbReference type="EC" id="7.1.2.2" evidence="1"/>
<dbReference type="EMBL" id="DQ232586">
    <property type="protein sequence ID" value="ABA81770.1"/>
    <property type="molecule type" value="Genomic_DNA"/>
</dbReference>
<dbReference type="RefSeq" id="WP_011836236.1">
    <property type="nucleotide sequence ID" value="NC_009007.1"/>
</dbReference>
<dbReference type="RefSeq" id="YP_001033875.1">
    <property type="nucleotide sequence ID" value="NC_009007.1"/>
</dbReference>
<dbReference type="SMR" id="Q3HKH4"/>
<dbReference type="EnsemblBacteria" id="ABA81770">
    <property type="protein sequence ID" value="ABA81770"/>
    <property type="gene ID" value="RSP_3929"/>
</dbReference>
<dbReference type="GeneID" id="4796502"/>
<dbReference type="KEGG" id="rsp:RSP_3929"/>
<dbReference type="PATRIC" id="fig|272943.9.peg.4348"/>
<dbReference type="OrthoDB" id="9801639at2"/>
<dbReference type="PhylomeDB" id="Q3HKH4"/>
<dbReference type="Proteomes" id="UP000002703">
    <property type="component" value="Plasmid A"/>
</dbReference>
<dbReference type="GO" id="GO:0005886">
    <property type="term" value="C:plasma membrane"/>
    <property type="evidence" value="ECO:0007669"/>
    <property type="project" value="UniProtKB-SubCell"/>
</dbReference>
<dbReference type="GO" id="GO:0045259">
    <property type="term" value="C:proton-transporting ATP synthase complex"/>
    <property type="evidence" value="ECO:0007669"/>
    <property type="project" value="UniProtKB-KW"/>
</dbReference>
<dbReference type="GO" id="GO:0005524">
    <property type="term" value="F:ATP binding"/>
    <property type="evidence" value="ECO:0007669"/>
    <property type="project" value="UniProtKB-UniRule"/>
</dbReference>
<dbReference type="GO" id="GO:0016887">
    <property type="term" value="F:ATP hydrolysis activity"/>
    <property type="evidence" value="ECO:0007669"/>
    <property type="project" value="InterPro"/>
</dbReference>
<dbReference type="GO" id="GO:0046933">
    <property type="term" value="F:proton-transporting ATP synthase activity, rotational mechanism"/>
    <property type="evidence" value="ECO:0007669"/>
    <property type="project" value="UniProtKB-UniRule"/>
</dbReference>
<dbReference type="CDD" id="cd18110">
    <property type="entry name" value="ATP-synt_F1_beta_C"/>
    <property type="match status" value="1"/>
</dbReference>
<dbReference type="CDD" id="cd18115">
    <property type="entry name" value="ATP-synt_F1_beta_N"/>
    <property type="match status" value="1"/>
</dbReference>
<dbReference type="CDD" id="cd01133">
    <property type="entry name" value="F1-ATPase_beta_CD"/>
    <property type="match status" value="1"/>
</dbReference>
<dbReference type="Gene3D" id="2.40.10.170">
    <property type="match status" value="1"/>
</dbReference>
<dbReference type="Gene3D" id="1.10.1140.10">
    <property type="entry name" value="Bovine Mitochondrial F1-atpase, Atp Synthase Beta Chain, Chain D, domain 3"/>
    <property type="match status" value="1"/>
</dbReference>
<dbReference type="Gene3D" id="3.40.50.300">
    <property type="entry name" value="P-loop containing nucleotide triphosphate hydrolases"/>
    <property type="match status" value="1"/>
</dbReference>
<dbReference type="HAMAP" id="MF_01347">
    <property type="entry name" value="ATP_synth_beta_bact"/>
    <property type="match status" value="1"/>
</dbReference>
<dbReference type="InterPro" id="IPR003593">
    <property type="entry name" value="AAA+_ATPase"/>
</dbReference>
<dbReference type="InterPro" id="IPR055190">
    <property type="entry name" value="ATP-synt_VA_C"/>
</dbReference>
<dbReference type="InterPro" id="IPR005722">
    <property type="entry name" value="ATP_synth_F1_bsu"/>
</dbReference>
<dbReference type="InterPro" id="IPR050053">
    <property type="entry name" value="ATPase_alpha/beta_chains"/>
</dbReference>
<dbReference type="InterPro" id="IPR004100">
    <property type="entry name" value="ATPase_F1/V1/A1_a/bsu_N"/>
</dbReference>
<dbReference type="InterPro" id="IPR036121">
    <property type="entry name" value="ATPase_F1/V1/A1_a/bsu_N_sf"/>
</dbReference>
<dbReference type="InterPro" id="IPR000194">
    <property type="entry name" value="ATPase_F1/V1/A1_a/bsu_nucl-bd"/>
</dbReference>
<dbReference type="InterPro" id="IPR024034">
    <property type="entry name" value="ATPase_F1/V1_b/a_C"/>
</dbReference>
<dbReference type="InterPro" id="IPR027417">
    <property type="entry name" value="P-loop_NTPase"/>
</dbReference>
<dbReference type="NCBIfam" id="TIGR01039">
    <property type="entry name" value="atpD"/>
    <property type="match status" value="1"/>
</dbReference>
<dbReference type="PANTHER" id="PTHR15184">
    <property type="entry name" value="ATP SYNTHASE"/>
    <property type="match status" value="1"/>
</dbReference>
<dbReference type="PANTHER" id="PTHR15184:SF71">
    <property type="entry name" value="ATP SYNTHASE SUBUNIT BETA, MITOCHONDRIAL"/>
    <property type="match status" value="1"/>
</dbReference>
<dbReference type="Pfam" id="PF00006">
    <property type="entry name" value="ATP-synt_ab"/>
    <property type="match status" value="1"/>
</dbReference>
<dbReference type="Pfam" id="PF02874">
    <property type="entry name" value="ATP-synt_ab_N"/>
    <property type="match status" value="1"/>
</dbReference>
<dbReference type="Pfam" id="PF22919">
    <property type="entry name" value="ATP-synt_VA_C"/>
    <property type="match status" value="1"/>
</dbReference>
<dbReference type="SMART" id="SM00382">
    <property type="entry name" value="AAA"/>
    <property type="match status" value="1"/>
</dbReference>
<dbReference type="SUPFAM" id="SSF47917">
    <property type="entry name" value="C-terminal domain of alpha and beta subunits of F1 ATP synthase"/>
    <property type="match status" value="1"/>
</dbReference>
<dbReference type="SUPFAM" id="SSF50615">
    <property type="entry name" value="N-terminal domain of alpha and beta subunits of F1 ATP synthase"/>
    <property type="match status" value="1"/>
</dbReference>
<dbReference type="SUPFAM" id="SSF52540">
    <property type="entry name" value="P-loop containing nucleoside triphosphate hydrolases"/>
    <property type="match status" value="1"/>
</dbReference>
<proteinExistence type="inferred from homology"/>
<name>ATPB2_CERS4</name>
<feature type="chain" id="PRO_0000339578" description="ATP synthase subunit beta 2">
    <location>
        <begin position="1"/>
        <end position="464"/>
    </location>
</feature>
<feature type="binding site" evidence="1">
    <location>
        <begin position="147"/>
        <end position="154"/>
    </location>
    <ligand>
        <name>ATP</name>
        <dbReference type="ChEBI" id="CHEBI:30616"/>
    </ligand>
</feature>
<evidence type="ECO:0000255" key="1">
    <source>
        <dbReference type="HAMAP-Rule" id="MF_01347"/>
    </source>
</evidence>